<reference key="1">
    <citation type="submission" date="2007-02" db="EMBL/GenBank/DDBJ databases">
        <title>Complete sequence of Mycobacterium sp. JLS.</title>
        <authorList>
            <consortium name="US DOE Joint Genome Institute"/>
            <person name="Copeland A."/>
            <person name="Lucas S."/>
            <person name="Lapidus A."/>
            <person name="Barry K."/>
            <person name="Detter J.C."/>
            <person name="Glavina del Rio T."/>
            <person name="Hammon N."/>
            <person name="Israni S."/>
            <person name="Dalin E."/>
            <person name="Tice H."/>
            <person name="Pitluck S."/>
            <person name="Chain P."/>
            <person name="Malfatti S."/>
            <person name="Shin M."/>
            <person name="Vergez L."/>
            <person name="Schmutz J."/>
            <person name="Larimer F."/>
            <person name="Land M."/>
            <person name="Hauser L."/>
            <person name="Kyrpides N."/>
            <person name="Mikhailova N."/>
            <person name="Miller C.D."/>
            <person name="Anderson A.J."/>
            <person name="Sims R.C."/>
            <person name="Richardson P."/>
        </authorList>
    </citation>
    <scope>NUCLEOTIDE SEQUENCE [LARGE SCALE GENOMIC DNA]</scope>
    <source>
        <strain>JLS</strain>
    </source>
</reference>
<protein>
    <recommendedName>
        <fullName evidence="1">Large ribosomal subunit protein bL19</fullName>
    </recommendedName>
    <alternativeName>
        <fullName evidence="2">50S ribosomal protein L19</fullName>
    </alternativeName>
</protein>
<organism>
    <name type="scientific">Mycobacterium sp. (strain JLS)</name>
    <dbReference type="NCBI Taxonomy" id="164757"/>
    <lineage>
        <taxon>Bacteria</taxon>
        <taxon>Bacillati</taxon>
        <taxon>Actinomycetota</taxon>
        <taxon>Actinomycetes</taxon>
        <taxon>Mycobacteriales</taxon>
        <taxon>Mycobacteriaceae</taxon>
        <taxon>Mycobacterium</taxon>
    </lineage>
</organism>
<sequence length="113" mass="12879">MNTLDFVDQSSLRDDIPAFGPGDTVNVHVKVIEGSKERIQVFKGVVIRRQGGGIRETFTVRKESYGVGVERTFPVHSPNIDHIDVVTRGDVRRAKLYYLRELRGKKAKIKEKR</sequence>
<evidence type="ECO:0000255" key="1">
    <source>
        <dbReference type="HAMAP-Rule" id="MF_00402"/>
    </source>
</evidence>
<evidence type="ECO:0000305" key="2"/>
<feature type="chain" id="PRO_1000049701" description="Large ribosomal subunit protein bL19">
    <location>
        <begin position="1"/>
        <end position="113"/>
    </location>
</feature>
<accession>A3PXW1</accession>
<name>RL19_MYCSJ</name>
<dbReference type="EMBL" id="CP000580">
    <property type="protein sequence ID" value="ABN97738.1"/>
    <property type="molecule type" value="Genomic_DNA"/>
</dbReference>
<dbReference type="SMR" id="A3PXW1"/>
<dbReference type="KEGG" id="mjl:Mjls_1950"/>
<dbReference type="HOGENOM" id="CLU_103507_2_1_11"/>
<dbReference type="BioCyc" id="MSP164757:G1G8C-1970-MONOMER"/>
<dbReference type="GO" id="GO:0022625">
    <property type="term" value="C:cytosolic large ribosomal subunit"/>
    <property type="evidence" value="ECO:0007669"/>
    <property type="project" value="TreeGrafter"/>
</dbReference>
<dbReference type="GO" id="GO:0003735">
    <property type="term" value="F:structural constituent of ribosome"/>
    <property type="evidence" value="ECO:0007669"/>
    <property type="project" value="InterPro"/>
</dbReference>
<dbReference type="GO" id="GO:0006412">
    <property type="term" value="P:translation"/>
    <property type="evidence" value="ECO:0007669"/>
    <property type="project" value="UniProtKB-UniRule"/>
</dbReference>
<dbReference type="FunFam" id="2.30.30.790:FF:000001">
    <property type="entry name" value="50S ribosomal protein L19"/>
    <property type="match status" value="1"/>
</dbReference>
<dbReference type="Gene3D" id="2.30.30.790">
    <property type="match status" value="1"/>
</dbReference>
<dbReference type="HAMAP" id="MF_00402">
    <property type="entry name" value="Ribosomal_bL19"/>
    <property type="match status" value="1"/>
</dbReference>
<dbReference type="InterPro" id="IPR001857">
    <property type="entry name" value="Ribosomal_bL19"/>
</dbReference>
<dbReference type="InterPro" id="IPR018257">
    <property type="entry name" value="Ribosomal_bL19_CS"/>
</dbReference>
<dbReference type="InterPro" id="IPR038657">
    <property type="entry name" value="Ribosomal_bL19_sf"/>
</dbReference>
<dbReference type="InterPro" id="IPR008991">
    <property type="entry name" value="Translation_prot_SH3-like_sf"/>
</dbReference>
<dbReference type="NCBIfam" id="TIGR01024">
    <property type="entry name" value="rplS_bact"/>
    <property type="match status" value="1"/>
</dbReference>
<dbReference type="PANTHER" id="PTHR15680:SF9">
    <property type="entry name" value="LARGE RIBOSOMAL SUBUNIT PROTEIN BL19M"/>
    <property type="match status" value="1"/>
</dbReference>
<dbReference type="PANTHER" id="PTHR15680">
    <property type="entry name" value="RIBOSOMAL PROTEIN L19"/>
    <property type="match status" value="1"/>
</dbReference>
<dbReference type="Pfam" id="PF01245">
    <property type="entry name" value="Ribosomal_L19"/>
    <property type="match status" value="1"/>
</dbReference>
<dbReference type="PIRSF" id="PIRSF002191">
    <property type="entry name" value="Ribosomal_L19"/>
    <property type="match status" value="1"/>
</dbReference>
<dbReference type="PRINTS" id="PR00061">
    <property type="entry name" value="RIBOSOMALL19"/>
</dbReference>
<dbReference type="SUPFAM" id="SSF50104">
    <property type="entry name" value="Translation proteins SH3-like domain"/>
    <property type="match status" value="1"/>
</dbReference>
<dbReference type="PROSITE" id="PS01015">
    <property type="entry name" value="RIBOSOMAL_L19"/>
    <property type="match status" value="1"/>
</dbReference>
<keyword id="KW-0687">Ribonucleoprotein</keyword>
<keyword id="KW-0689">Ribosomal protein</keyword>
<gene>
    <name evidence="1" type="primary">rplS</name>
    <name type="ordered locus">Mjls_1950</name>
</gene>
<comment type="function">
    <text evidence="1">This protein is located at the 30S-50S ribosomal subunit interface and may play a role in the structure and function of the aminoacyl-tRNA binding site.</text>
</comment>
<comment type="similarity">
    <text evidence="1">Belongs to the bacterial ribosomal protein bL19 family.</text>
</comment>
<proteinExistence type="inferred from homology"/>